<accession>Q90935</accession>
<accession>A0A1I7Q408</accession>
<proteinExistence type="evidence at protein level"/>
<comment type="function">
    <text evidence="4 5">Serine protease inhibitor that inhibits plasminogen activators and plasmin but not thrombin (PubMed:9442076). May be involved in the formation or reorganization of synaptic connections as well as for synaptic plasticity in the adult nervous system. May protect neurons from cell damage by tissue-type plasminogen activator (Probable).</text>
</comment>
<comment type="subcellular location">
    <subcellularLocation>
        <location evidence="3 4">Secreted</location>
    </subcellularLocation>
    <subcellularLocation>
        <location evidence="1">Cytoplasmic vesicle</location>
        <location evidence="1">Secretory vesicle lumen</location>
    </subcellularLocation>
    <subcellularLocation>
        <location evidence="1">Perikaryon</location>
    </subcellularLocation>
</comment>
<comment type="tissue specificity">
    <text evidence="3 4">Detected in embryonic ocular vitreous fluid (at protein level) (PubMed:9442076). In the embryo present in retina, brain, cerebellum and spinal cord (PubMed:8670795). In adult, predominantly expressed in the brain (PubMed:8670795).</text>
</comment>
<comment type="similarity">
    <text evidence="5">Belongs to the serpin family.</text>
</comment>
<organism>
    <name type="scientific">Gallus gallus</name>
    <name type="common">Chicken</name>
    <dbReference type="NCBI Taxonomy" id="9031"/>
    <lineage>
        <taxon>Eukaryota</taxon>
        <taxon>Metazoa</taxon>
        <taxon>Chordata</taxon>
        <taxon>Craniata</taxon>
        <taxon>Vertebrata</taxon>
        <taxon>Euteleostomi</taxon>
        <taxon>Archelosauria</taxon>
        <taxon>Archosauria</taxon>
        <taxon>Dinosauria</taxon>
        <taxon>Saurischia</taxon>
        <taxon>Theropoda</taxon>
        <taxon>Coelurosauria</taxon>
        <taxon>Aves</taxon>
        <taxon>Neognathae</taxon>
        <taxon>Galloanserae</taxon>
        <taxon>Galliformes</taxon>
        <taxon>Phasianidae</taxon>
        <taxon>Phasianinae</taxon>
        <taxon>Gallus</taxon>
    </lineage>
</organism>
<protein>
    <recommendedName>
        <fullName>Neuroserpin</fullName>
    </recommendedName>
    <alternativeName>
        <fullName>Axonin-2</fullName>
    </alternativeName>
    <alternativeName>
        <fullName>Peptidase inhibitor 12</fullName>
        <shortName>PI-12</shortName>
    </alternativeName>
    <alternativeName>
        <fullName>Serpin I1</fullName>
    </alternativeName>
</protein>
<evidence type="ECO:0000250" key="1">
    <source>
        <dbReference type="UniProtKB" id="Q99574"/>
    </source>
</evidence>
<evidence type="ECO:0000255" key="2"/>
<evidence type="ECO:0000269" key="3">
    <source>
    </source>
</evidence>
<evidence type="ECO:0000269" key="4">
    <source>
    </source>
</evidence>
<evidence type="ECO:0000305" key="5"/>
<keyword id="KW-0968">Cytoplasmic vesicle</keyword>
<keyword id="KW-0903">Direct protein sequencing</keyword>
<keyword id="KW-0325">Glycoprotein</keyword>
<keyword id="KW-0646">Protease inhibitor</keyword>
<keyword id="KW-1185">Reference proteome</keyword>
<keyword id="KW-0964">Secreted</keyword>
<keyword id="KW-0722">Serine protease inhibitor</keyword>
<keyword id="KW-0732">Signal</keyword>
<dbReference type="EMBL" id="Z71930">
    <property type="protein sequence ID" value="CAA96493.1"/>
    <property type="molecule type" value="mRNA"/>
</dbReference>
<dbReference type="EMBL" id="AADN04000312">
    <property type="status" value="NOT_ANNOTATED_CDS"/>
    <property type="molecule type" value="Genomic_DNA"/>
</dbReference>
<dbReference type="PIR" id="S70647">
    <property type="entry name" value="S70647"/>
</dbReference>
<dbReference type="RefSeq" id="NP_001004411.1">
    <property type="nucleotide sequence ID" value="NM_001004411.1"/>
</dbReference>
<dbReference type="RefSeq" id="XP_015147152.2">
    <property type="nucleotide sequence ID" value="XM_015291666.4"/>
</dbReference>
<dbReference type="RefSeq" id="XP_015147153.2">
    <property type="nucleotide sequence ID" value="XM_015291667.4"/>
</dbReference>
<dbReference type="RefSeq" id="XP_025009149.2">
    <property type="nucleotide sequence ID" value="XM_025153381.3"/>
</dbReference>
<dbReference type="RefSeq" id="XP_040561512.1">
    <property type="nucleotide sequence ID" value="XM_040705578.2"/>
</dbReference>
<dbReference type="SMR" id="Q90935"/>
<dbReference type="FunCoup" id="Q90935">
    <property type="interactions" value="265"/>
</dbReference>
<dbReference type="STRING" id="9031.ENSGALP00000015400"/>
<dbReference type="MEROPS" id="I04.025"/>
<dbReference type="GlyCosmos" id="Q90935">
    <property type="glycosylation" value="2 sites, No reported glycans"/>
</dbReference>
<dbReference type="GlyGen" id="Q90935">
    <property type="glycosylation" value="2 sites"/>
</dbReference>
<dbReference type="PaxDb" id="9031-ENSGALP00000015400"/>
<dbReference type="Ensembl" id="ENSGALT00010002889.1">
    <property type="protein sequence ID" value="ENSGALP00010001435.1"/>
    <property type="gene ID" value="ENSGALG00010001245.1"/>
</dbReference>
<dbReference type="GeneID" id="425002"/>
<dbReference type="KEGG" id="gga:425002"/>
<dbReference type="CTD" id="5274"/>
<dbReference type="VEuPathDB" id="HostDB:geneid_425002"/>
<dbReference type="eggNOG" id="KOG2392">
    <property type="taxonomic scope" value="Eukaryota"/>
</dbReference>
<dbReference type="GeneTree" id="ENSGT00940000158168"/>
<dbReference type="HOGENOM" id="CLU_023330_0_4_1"/>
<dbReference type="InParanoid" id="Q90935"/>
<dbReference type="OMA" id="IQNGFHV"/>
<dbReference type="OrthoDB" id="9518664at2759"/>
<dbReference type="PhylomeDB" id="Q90935"/>
<dbReference type="TreeFam" id="TF352620"/>
<dbReference type="PRO" id="PR:Q90935"/>
<dbReference type="Proteomes" id="UP000000539">
    <property type="component" value="Chromosome 9"/>
</dbReference>
<dbReference type="GO" id="GO:0060205">
    <property type="term" value="C:cytoplasmic vesicle lumen"/>
    <property type="evidence" value="ECO:0000250"/>
    <property type="project" value="UniProtKB"/>
</dbReference>
<dbReference type="GO" id="GO:0005615">
    <property type="term" value="C:extracellular space"/>
    <property type="evidence" value="ECO:0000314"/>
    <property type="project" value="UniProtKB"/>
</dbReference>
<dbReference type="GO" id="GO:0043025">
    <property type="term" value="C:neuronal cell body"/>
    <property type="evidence" value="ECO:0000250"/>
    <property type="project" value="UniProtKB"/>
</dbReference>
<dbReference type="GO" id="GO:0043204">
    <property type="term" value="C:perikaryon"/>
    <property type="evidence" value="ECO:0007669"/>
    <property type="project" value="UniProtKB-SubCell"/>
</dbReference>
<dbReference type="GO" id="GO:0004867">
    <property type="term" value="F:serine-type endopeptidase inhibitor activity"/>
    <property type="evidence" value="ECO:0000314"/>
    <property type="project" value="UniProtKB"/>
</dbReference>
<dbReference type="CDD" id="cd02048">
    <property type="entry name" value="serpinI1_NSP"/>
    <property type="match status" value="1"/>
</dbReference>
<dbReference type="FunFam" id="3.30.497.10:FF:000005">
    <property type="entry name" value="serpin I2 isoform X1"/>
    <property type="match status" value="1"/>
</dbReference>
<dbReference type="Gene3D" id="2.30.39.10">
    <property type="entry name" value="Alpha-1-antitrypsin, domain 1"/>
    <property type="match status" value="1"/>
</dbReference>
<dbReference type="Gene3D" id="3.30.497.10">
    <property type="entry name" value="Antithrombin, subunit I, domain 2"/>
    <property type="match status" value="1"/>
</dbReference>
<dbReference type="InterPro" id="IPR023795">
    <property type="entry name" value="Serpin_CS"/>
</dbReference>
<dbReference type="InterPro" id="IPR023796">
    <property type="entry name" value="Serpin_dom"/>
</dbReference>
<dbReference type="InterPro" id="IPR000215">
    <property type="entry name" value="Serpin_fam"/>
</dbReference>
<dbReference type="InterPro" id="IPR036186">
    <property type="entry name" value="Serpin_sf"/>
</dbReference>
<dbReference type="InterPro" id="IPR042178">
    <property type="entry name" value="Serpin_sf_1"/>
</dbReference>
<dbReference type="InterPro" id="IPR042185">
    <property type="entry name" value="Serpin_sf_2"/>
</dbReference>
<dbReference type="PANTHER" id="PTHR11461:SF50">
    <property type="entry name" value="NEUROSERPIN"/>
    <property type="match status" value="1"/>
</dbReference>
<dbReference type="PANTHER" id="PTHR11461">
    <property type="entry name" value="SERINE PROTEASE INHIBITOR, SERPIN"/>
    <property type="match status" value="1"/>
</dbReference>
<dbReference type="Pfam" id="PF00079">
    <property type="entry name" value="Serpin"/>
    <property type="match status" value="1"/>
</dbReference>
<dbReference type="SMART" id="SM00093">
    <property type="entry name" value="SERPIN"/>
    <property type="match status" value="1"/>
</dbReference>
<dbReference type="SUPFAM" id="SSF56574">
    <property type="entry name" value="Serpins"/>
    <property type="match status" value="1"/>
</dbReference>
<dbReference type="PROSITE" id="PS00284">
    <property type="entry name" value="SERPIN"/>
    <property type="match status" value="1"/>
</dbReference>
<gene>
    <name type="primary">SERPINI1</name>
    <name type="synonym">PI12</name>
</gene>
<reference key="1">
    <citation type="journal article" date="1996" name="EMBO J.">
        <title>Neuroserpin, an axonally secreted serine protease inhibitor.</title>
        <authorList>
            <person name="Osterwalder T."/>
            <person name="Contartese J."/>
            <person name="Stoeckli E.T."/>
            <person name="Kuhn T.B."/>
            <person name="Sonderegger P."/>
        </authorList>
    </citation>
    <scope>NUCLEOTIDE SEQUENCE [MRNA]</scope>
    <scope>PARTIAL PROTEIN SEQUENCE</scope>
    <scope>SUBCELLULAR LOCATION</scope>
    <scope>TISSUE SPECIFICITY</scope>
    <source>
        <strain>White leghorn</strain>
        <tissue>Brain</tissue>
    </source>
</reference>
<reference key="2">
    <citation type="journal article" date="2004" name="Nature">
        <title>Sequence and comparative analysis of the chicken genome provide unique perspectives on vertebrate evolution.</title>
        <authorList>
            <person name="Hillier L.W."/>
            <person name="Miller W."/>
            <person name="Birney E."/>
            <person name="Warren W."/>
            <person name="Hardison R.C."/>
            <person name="Ponting C.P."/>
            <person name="Bork P."/>
            <person name="Burt D.W."/>
            <person name="Groenen M.A.M."/>
            <person name="Delany M.E."/>
            <person name="Dodgson J.B."/>
            <person name="Chinwalla A.T."/>
            <person name="Cliften P.F."/>
            <person name="Clifton S.W."/>
            <person name="Delehaunty K.D."/>
            <person name="Fronick C."/>
            <person name="Fulton R.S."/>
            <person name="Graves T.A."/>
            <person name="Kremitzki C."/>
            <person name="Layman D."/>
            <person name="Magrini V."/>
            <person name="McPherson J.D."/>
            <person name="Miner T.L."/>
            <person name="Minx P."/>
            <person name="Nash W.E."/>
            <person name="Nhan M.N."/>
            <person name="Nelson J.O."/>
            <person name="Oddy L.G."/>
            <person name="Pohl C.S."/>
            <person name="Randall-Maher J."/>
            <person name="Smith S.M."/>
            <person name="Wallis J.W."/>
            <person name="Yang S.-P."/>
            <person name="Romanov M.N."/>
            <person name="Rondelli C.M."/>
            <person name="Paton B."/>
            <person name="Smith J."/>
            <person name="Morrice D."/>
            <person name="Daniels L."/>
            <person name="Tempest H.G."/>
            <person name="Robertson L."/>
            <person name="Masabanda J.S."/>
            <person name="Griffin D.K."/>
            <person name="Vignal A."/>
            <person name="Fillon V."/>
            <person name="Jacobbson L."/>
            <person name="Kerje S."/>
            <person name="Andersson L."/>
            <person name="Crooijmans R.P."/>
            <person name="Aerts J."/>
            <person name="van der Poel J.J."/>
            <person name="Ellegren H."/>
            <person name="Caldwell R.B."/>
            <person name="Hubbard S.J."/>
            <person name="Grafham D.V."/>
            <person name="Kierzek A.M."/>
            <person name="McLaren S.R."/>
            <person name="Overton I.M."/>
            <person name="Arakawa H."/>
            <person name="Beattie K.J."/>
            <person name="Bezzubov Y."/>
            <person name="Boardman P.E."/>
            <person name="Bonfield J.K."/>
            <person name="Croning M.D.R."/>
            <person name="Davies R.M."/>
            <person name="Francis M.D."/>
            <person name="Humphray S.J."/>
            <person name="Scott C.E."/>
            <person name="Taylor R.G."/>
            <person name="Tickle C."/>
            <person name="Brown W.R.A."/>
            <person name="Rogers J."/>
            <person name="Buerstedde J.-M."/>
            <person name="Wilson S.A."/>
            <person name="Stubbs L."/>
            <person name="Ovcharenko I."/>
            <person name="Gordon L."/>
            <person name="Lucas S."/>
            <person name="Miller M.M."/>
            <person name="Inoko H."/>
            <person name="Shiina T."/>
            <person name="Kaufman J."/>
            <person name="Salomonsen J."/>
            <person name="Skjoedt K."/>
            <person name="Wong G.K.-S."/>
            <person name="Wang J."/>
            <person name="Liu B."/>
            <person name="Wang J."/>
            <person name="Yu J."/>
            <person name="Yang H."/>
            <person name="Nefedov M."/>
            <person name="Koriabine M."/>
            <person name="Dejong P.J."/>
            <person name="Goodstadt L."/>
            <person name="Webber C."/>
            <person name="Dickens N.J."/>
            <person name="Letunic I."/>
            <person name="Suyama M."/>
            <person name="Torrents D."/>
            <person name="von Mering C."/>
            <person name="Zdobnov E.M."/>
            <person name="Makova K."/>
            <person name="Nekrutenko A."/>
            <person name="Elnitski L."/>
            <person name="Eswara P."/>
            <person name="King D.C."/>
            <person name="Yang S.-P."/>
            <person name="Tyekucheva S."/>
            <person name="Radakrishnan A."/>
            <person name="Harris R.S."/>
            <person name="Chiaromonte F."/>
            <person name="Taylor J."/>
            <person name="He J."/>
            <person name="Rijnkels M."/>
            <person name="Griffiths-Jones S."/>
            <person name="Ureta-Vidal A."/>
            <person name="Hoffman M.M."/>
            <person name="Severin J."/>
            <person name="Searle S.M.J."/>
            <person name="Law A.S."/>
            <person name="Speed D."/>
            <person name="Waddington D."/>
            <person name="Cheng Z."/>
            <person name="Tuzun E."/>
            <person name="Eichler E."/>
            <person name="Bao Z."/>
            <person name="Flicek P."/>
            <person name="Shteynberg D.D."/>
            <person name="Brent M.R."/>
            <person name="Bye J.M."/>
            <person name="Huckle E.J."/>
            <person name="Chatterji S."/>
            <person name="Dewey C."/>
            <person name="Pachter L."/>
            <person name="Kouranov A."/>
            <person name="Mourelatos Z."/>
            <person name="Hatzigeorgiou A.G."/>
            <person name="Paterson A.H."/>
            <person name="Ivarie R."/>
            <person name="Brandstrom M."/>
            <person name="Axelsson E."/>
            <person name="Backstrom N."/>
            <person name="Berlin S."/>
            <person name="Webster M.T."/>
            <person name="Pourquie O."/>
            <person name="Reymond A."/>
            <person name="Ucla C."/>
            <person name="Antonarakis S.E."/>
            <person name="Long M."/>
            <person name="Emerson J.J."/>
            <person name="Betran E."/>
            <person name="Dupanloup I."/>
            <person name="Kaessmann H."/>
            <person name="Hinrichs A.S."/>
            <person name="Bejerano G."/>
            <person name="Furey T.S."/>
            <person name="Harte R.A."/>
            <person name="Raney B."/>
            <person name="Siepel A."/>
            <person name="Kent W.J."/>
            <person name="Haussler D."/>
            <person name="Eyras E."/>
            <person name="Castelo R."/>
            <person name="Abril J.F."/>
            <person name="Castellano S."/>
            <person name="Camara F."/>
            <person name="Parra G."/>
            <person name="Guigo R."/>
            <person name="Bourque G."/>
            <person name="Tesler G."/>
            <person name="Pevzner P.A."/>
            <person name="Smit A."/>
            <person name="Fulton L.A."/>
            <person name="Mardis E.R."/>
            <person name="Wilson R.K."/>
        </authorList>
    </citation>
    <scope>NUCLEOTIDE SEQUENCE [LARGE SCALE GENOMIC DNA]</scope>
    <source>
        <strain>Red jungle fowl</strain>
    </source>
</reference>
<reference key="3">
    <citation type="journal article" date="1998" name="J. Biol. Chem.">
        <title>The axonally secreted serine proteinase inhibitor, neuroserpin, inhibits plasminogen activators and plasmin but not thrombin.</title>
        <authorList>
            <person name="Osterwalder T."/>
            <person name="Cinelli P."/>
            <person name="Baici A."/>
            <person name="Pennella A."/>
            <person name="Krueger S.R."/>
            <person name="Schrimpf S.P."/>
            <person name="Meins M."/>
            <person name="Sonderegger P."/>
        </authorList>
    </citation>
    <scope>FUNCTION</scope>
    <scope>SUBCELLULAR LOCATION</scope>
    <scope>TISSUE SPECIFICITY</scope>
    <scope>MUTAGENESIS OF 362-ARG-MET-363</scope>
    <scope>REACTIVE BOND</scope>
</reference>
<feature type="signal peptide" evidence="3">
    <location>
        <begin position="1"/>
        <end position="16"/>
    </location>
</feature>
<feature type="chain" id="PRO_0000032524" description="Neuroserpin">
    <location>
        <begin position="17"/>
        <end position="410"/>
    </location>
</feature>
<feature type="site" description="Reactive bond" evidence="4">
    <location>
        <begin position="362"/>
        <end position="363"/>
    </location>
</feature>
<feature type="glycosylation site" description="N-linked (GlcNAc...) asparagine" evidence="2">
    <location>
        <position position="157"/>
    </location>
</feature>
<feature type="glycosylation site" description="N-linked (GlcNAc...) asparagine" evidence="2">
    <location>
        <position position="401"/>
    </location>
</feature>
<feature type="mutagenesis site" description="Loss of protease inhibitor activity." evidence="4">
    <original>RM</original>
    <variation>EP</variation>
    <location>
        <begin position="362"/>
        <end position="363"/>
    </location>
</feature>
<sequence length="410" mass="46529">MYFLGLLSLLVLPSKAFKTNFPDETIAELSVNVYNQLRAAREDENILFCPLSIAIAMGMIELGAHGTTLKEIRHSLGFDSLKNGEEFTFLKDLSDMATTEESHYVLNMANSLYVQNGFHVSEKFLQLVKKYFKAEVENIDFSQSAAVATHINKWVENHTNNMIKDFVSSRDFSALTHLVLINAIYFKGNWKSQFRPENTRTFSFTKDDETEVQIPMMYQQGEFYYGEFSDGSNEAGGIYQVLEIPYEGDEISMMIVLSRQEVPLVTLEPLVKASLINEWANSVKKQKVEVYLPRFTVEQEIDLKDVLKGLGITEVFSRSADLTAMSDNKELYLAKAFHKAFLEVNEEGSEAAAASGMIAISRMAVLYPQVIVDHPFFFLVRNRRTGTVLFMGRVMHPEAMNTSGHDFEEL</sequence>
<name>NEUS_CHICK</name>